<accession>A8GPD3</accession>
<reference key="1">
    <citation type="submission" date="2007-09" db="EMBL/GenBank/DDBJ databases">
        <title>Complete genome sequence of Rickettsia akari.</title>
        <authorList>
            <person name="Madan A."/>
            <person name="Fahey J."/>
            <person name="Helton E."/>
            <person name="Ketteman M."/>
            <person name="Madan A."/>
            <person name="Rodrigues S."/>
            <person name="Sanchez A."/>
            <person name="Whiting M."/>
            <person name="Dasch G."/>
            <person name="Eremeeva M."/>
        </authorList>
    </citation>
    <scope>NUCLEOTIDE SEQUENCE [LARGE SCALE GENOMIC DNA]</scope>
    <source>
        <strain>Hartford</strain>
    </source>
</reference>
<keyword id="KW-0687">Ribonucleoprotein</keyword>
<keyword id="KW-0689">Ribosomal protein</keyword>
<keyword id="KW-0694">RNA-binding</keyword>
<keyword id="KW-0699">rRNA-binding</keyword>
<comment type="function">
    <text evidence="1">With S4 and S12 plays an important role in translational accuracy.</text>
</comment>
<comment type="function">
    <text evidence="1">Located at the back of the 30S subunit body where it stabilizes the conformation of the head with respect to the body.</text>
</comment>
<comment type="subunit">
    <text evidence="1">Part of the 30S ribosomal subunit. Contacts proteins S4 and S8.</text>
</comment>
<comment type="domain">
    <text>The N-terminal domain interacts with the head of the 30S subunit; the C-terminal domain interacts with the body and contacts protein S4. The interaction surface between S4 and S5 is involved in control of translational fidelity.</text>
</comment>
<comment type="similarity">
    <text evidence="1">Belongs to the universal ribosomal protein uS5 family.</text>
</comment>
<name>RS5_RICAH</name>
<dbReference type="EMBL" id="CP000847">
    <property type="protein sequence ID" value="ABV75258.1"/>
    <property type="molecule type" value="Genomic_DNA"/>
</dbReference>
<dbReference type="RefSeq" id="WP_012149888.1">
    <property type="nucleotide sequence ID" value="NC_009881.1"/>
</dbReference>
<dbReference type="SMR" id="A8GPD3"/>
<dbReference type="STRING" id="293614.A1C_05020"/>
<dbReference type="KEGG" id="rak:A1C_05020"/>
<dbReference type="eggNOG" id="COG0098">
    <property type="taxonomic scope" value="Bacteria"/>
</dbReference>
<dbReference type="HOGENOM" id="CLU_065898_2_2_5"/>
<dbReference type="Proteomes" id="UP000006830">
    <property type="component" value="Chromosome"/>
</dbReference>
<dbReference type="GO" id="GO:0015935">
    <property type="term" value="C:small ribosomal subunit"/>
    <property type="evidence" value="ECO:0007669"/>
    <property type="project" value="InterPro"/>
</dbReference>
<dbReference type="GO" id="GO:0019843">
    <property type="term" value="F:rRNA binding"/>
    <property type="evidence" value="ECO:0007669"/>
    <property type="project" value="UniProtKB-UniRule"/>
</dbReference>
<dbReference type="GO" id="GO:0003735">
    <property type="term" value="F:structural constituent of ribosome"/>
    <property type="evidence" value="ECO:0007669"/>
    <property type="project" value="InterPro"/>
</dbReference>
<dbReference type="GO" id="GO:0006412">
    <property type="term" value="P:translation"/>
    <property type="evidence" value="ECO:0007669"/>
    <property type="project" value="UniProtKB-UniRule"/>
</dbReference>
<dbReference type="FunFam" id="3.30.230.10:FF:000002">
    <property type="entry name" value="30S ribosomal protein S5"/>
    <property type="match status" value="1"/>
</dbReference>
<dbReference type="Gene3D" id="3.30.160.20">
    <property type="match status" value="1"/>
</dbReference>
<dbReference type="Gene3D" id="3.30.230.10">
    <property type="match status" value="1"/>
</dbReference>
<dbReference type="HAMAP" id="MF_01307_B">
    <property type="entry name" value="Ribosomal_uS5_B"/>
    <property type="match status" value="1"/>
</dbReference>
<dbReference type="InterPro" id="IPR020568">
    <property type="entry name" value="Ribosomal_Su5_D2-typ_SF"/>
</dbReference>
<dbReference type="InterPro" id="IPR000851">
    <property type="entry name" value="Ribosomal_uS5"/>
</dbReference>
<dbReference type="InterPro" id="IPR005712">
    <property type="entry name" value="Ribosomal_uS5_bac-type"/>
</dbReference>
<dbReference type="InterPro" id="IPR005324">
    <property type="entry name" value="Ribosomal_uS5_C"/>
</dbReference>
<dbReference type="InterPro" id="IPR013810">
    <property type="entry name" value="Ribosomal_uS5_N"/>
</dbReference>
<dbReference type="InterPro" id="IPR018192">
    <property type="entry name" value="Ribosomal_uS5_N_CS"/>
</dbReference>
<dbReference type="InterPro" id="IPR014721">
    <property type="entry name" value="Ribsml_uS5_D2-typ_fold_subgr"/>
</dbReference>
<dbReference type="NCBIfam" id="TIGR01021">
    <property type="entry name" value="rpsE_bact"/>
    <property type="match status" value="1"/>
</dbReference>
<dbReference type="PANTHER" id="PTHR48277">
    <property type="entry name" value="MITOCHONDRIAL RIBOSOMAL PROTEIN S5"/>
    <property type="match status" value="1"/>
</dbReference>
<dbReference type="PANTHER" id="PTHR48277:SF1">
    <property type="entry name" value="MITOCHONDRIAL RIBOSOMAL PROTEIN S5"/>
    <property type="match status" value="1"/>
</dbReference>
<dbReference type="Pfam" id="PF00333">
    <property type="entry name" value="Ribosomal_S5"/>
    <property type="match status" value="1"/>
</dbReference>
<dbReference type="Pfam" id="PF03719">
    <property type="entry name" value="Ribosomal_S5_C"/>
    <property type="match status" value="1"/>
</dbReference>
<dbReference type="SUPFAM" id="SSF54768">
    <property type="entry name" value="dsRNA-binding domain-like"/>
    <property type="match status" value="1"/>
</dbReference>
<dbReference type="SUPFAM" id="SSF54211">
    <property type="entry name" value="Ribosomal protein S5 domain 2-like"/>
    <property type="match status" value="1"/>
</dbReference>
<dbReference type="PROSITE" id="PS00585">
    <property type="entry name" value="RIBOSOMAL_S5"/>
    <property type="match status" value="1"/>
</dbReference>
<dbReference type="PROSITE" id="PS50881">
    <property type="entry name" value="S5_DSRBD"/>
    <property type="match status" value="1"/>
</dbReference>
<sequence>MSKVKKNEDTLSEVLVDVNRVTKVVKGGRRFAFSAYVVVGDKAGRVGAGHGKAKEVNEARGKAKQAAKKRMMKVPLYQNRTIHHDVVGKSGAAKVILRRAKAGTGVIAGGSMRAIFDSLGVHDIVAKSIGSTNVYAMISATFDALNKLASPKSIAMRRDKKVNEISIKSSDIQVNE</sequence>
<gene>
    <name evidence="1" type="primary">rpsE</name>
    <name type="ordered locus">A1C_05020</name>
</gene>
<organism>
    <name type="scientific">Rickettsia akari (strain Hartford)</name>
    <dbReference type="NCBI Taxonomy" id="293614"/>
    <lineage>
        <taxon>Bacteria</taxon>
        <taxon>Pseudomonadati</taxon>
        <taxon>Pseudomonadota</taxon>
        <taxon>Alphaproteobacteria</taxon>
        <taxon>Rickettsiales</taxon>
        <taxon>Rickettsiaceae</taxon>
        <taxon>Rickettsieae</taxon>
        <taxon>Rickettsia</taxon>
        <taxon>spotted fever group</taxon>
    </lineage>
</organism>
<proteinExistence type="inferred from homology"/>
<feature type="chain" id="PRO_0000323183" description="Small ribosomal subunit protein uS5">
    <location>
        <begin position="1"/>
        <end position="176"/>
    </location>
</feature>
<feature type="domain" description="S5 DRBM" evidence="1">
    <location>
        <begin position="11"/>
        <end position="74"/>
    </location>
</feature>
<protein>
    <recommendedName>
        <fullName evidence="1">Small ribosomal subunit protein uS5</fullName>
    </recommendedName>
    <alternativeName>
        <fullName evidence="2">30S ribosomal protein S5</fullName>
    </alternativeName>
</protein>
<evidence type="ECO:0000255" key="1">
    <source>
        <dbReference type="HAMAP-Rule" id="MF_01307"/>
    </source>
</evidence>
<evidence type="ECO:0000305" key="2"/>